<comment type="function">
    <text evidence="1">Component of the 90S pre-ribosome involved in the maturation of rRNAs. Required for early cleavages of the pre-RNAs in the 40S ribosomal subunit maturation pathway (By similarity).</text>
</comment>
<comment type="subunit">
    <text evidence="1">Associates with 90S and pre-40S pre-ribosomal particles.</text>
</comment>
<comment type="subcellular location">
    <subcellularLocation>
        <location evidence="1">Nucleus</location>
        <location evidence="1">Nucleolus</location>
    </subcellularLocation>
</comment>
<comment type="similarity">
    <text evidence="4">Belongs to the RRP36 family.</text>
</comment>
<protein>
    <recommendedName>
        <fullName>rRNA biogenesis protein RRP36</fullName>
    </recommendedName>
    <alternativeName>
        <fullName>Ribosomal RNA-processing protein 36</fullName>
    </alternativeName>
</protein>
<feature type="chain" id="PRO_0000397645" description="rRNA biogenesis protein RRP36">
    <location>
        <begin position="1"/>
        <end position="343"/>
    </location>
</feature>
<feature type="region of interest" description="Disordered" evidence="3">
    <location>
        <begin position="1"/>
        <end position="82"/>
    </location>
</feature>
<feature type="region of interest" description="Disordered" evidence="3">
    <location>
        <begin position="94"/>
        <end position="181"/>
    </location>
</feature>
<feature type="region of interest" description="Disordered" evidence="3">
    <location>
        <begin position="310"/>
        <end position="343"/>
    </location>
</feature>
<feature type="coiled-coil region" evidence="2">
    <location>
        <begin position="214"/>
        <end position="266"/>
    </location>
</feature>
<feature type="compositionally biased region" description="Acidic residues" evidence="3">
    <location>
        <begin position="33"/>
        <end position="54"/>
    </location>
</feature>
<feature type="compositionally biased region" description="Acidic residues" evidence="3">
    <location>
        <begin position="61"/>
        <end position="72"/>
    </location>
</feature>
<feature type="compositionally biased region" description="Basic and acidic residues" evidence="3">
    <location>
        <begin position="310"/>
        <end position="320"/>
    </location>
</feature>
<feature type="compositionally biased region" description="Basic and acidic residues" evidence="3">
    <location>
        <begin position="328"/>
        <end position="343"/>
    </location>
</feature>
<keyword id="KW-0175">Coiled coil</keyword>
<keyword id="KW-0539">Nucleus</keyword>
<keyword id="KW-0687">Ribonucleoprotein</keyword>
<keyword id="KW-0690">Ribosome biogenesis</keyword>
<keyword id="KW-0698">rRNA processing</keyword>
<evidence type="ECO:0000250" key="1"/>
<evidence type="ECO:0000255" key="2"/>
<evidence type="ECO:0000256" key="3">
    <source>
        <dbReference type="SAM" id="MobiDB-lite"/>
    </source>
</evidence>
<evidence type="ECO:0000305" key="4"/>
<sequence>MPILSKLNKRVRARVEEDDFEHFSQESASDGSELGEEDEEETDDSDGSTSESDDGSGRDGDESENEDLESDSASDANSDITSSLNNISFGALAKAQASLGKRKRSTTLTADIASKRPKGPSRSPPAPSSKEDQKYPNATKPPQKLSHRTSKHAPTIQSSRHAVTRKRTVIENPAIPQARDPRFDSVVLNHSTNGNPSIATNATIHASKNYAFLNSYRTEELSQLRKRLQNLQREKSKDTHDEREIERLKRQITSMSDRMRTFERKEMEREVLAGHRRKEREAIREGKKSQPWFLKKGDVKREVVTRRFTEMSGKEKQRALERRRKKIASKEKKEMPWARRGVE</sequence>
<name>RRP36_PARBP</name>
<accession>C0SGK2</accession>
<organism>
    <name type="scientific">Paracoccidioides brasiliensis (strain Pb03)</name>
    <dbReference type="NCBI Taxonomy" id="482561"/>
    <lineage>
        <taxon>Eukaryota</taxon>
        <taxon>Fungi</taxon>
        <taxon>Dikarya</taxon>
        <taxon>Ascomycota</taxon>
        <taxon>Pezizomycotina</taxon>
        <taxon>Eurotiomycetes</taxon>
        <taxon>Eurotiomycetidae</taxon>
        <taxon>Onygenales</taxon>
        <taxon>Ajellomycetaceae</taxon>
        <taxon>Paracoccidioides</taxon>
    </lineage>
</organism>
<proteinExistence type="inferred from homology"/>
<reference key="1">
    <citation type="journal article" date="2011" name="PLoS Genet.">
        <title>Comparative genomic analysis of human fungal pathogens causing paracoccidioidomycosis.</title>
        <authorList>
            <person name="Desjardins C.A."/>
            <person name="Champion M.D."/>
            <person name="Holder J.W."/>
            <person name="Muszewska A."/>
            <person name="Goldberg J."/>
            <person name="Bailao A.M."/>
            <person name="Brigido M.M."/>
            <person name="Ferreira M.E."/>
            <person name="Garcia A.M."/>
            <person name="Grynberg M."/>
            <person name="Gujja S."/>
            <person name="Heiman D.I."/>
            <person name="Henn M.R."/>
            <person name="Kodira C.D."/>
            <person name="Leon-Narvaez H."/>
            <person name="Longo L.V.G."/>
            <person name="Ma L.-J."/>
            <person name="Malavazi I."/>
            <person name="Matsuo A.L."/>
            <person name="Morais F.V."/>
            <person name="Pereira M."/>
            <person name="Rodriguez-Brito S."/>
            <person name="Sakthikumar S."/>
            <person name="Salem-Izacc S.M."/>
            <person name="Sykes S.M."/>
            <person name="Teixeira M.M."/>
            <person name="Vallejo M.C."/>
            <person name="Walter M.E."/>
            <person name="Yandava C."/>
            <person name="Young S."/>
            <person name="Zeng Q."/>
            <person name="Zucker J."/>
            <person name="Felipe M.S."/>
            <person name="Goldman G.H."/>
            <person name="Haas B.J."/>
            <person name="McEwen J.G."/>
            <person name="Nino-Vega G."/>
            <person name="Puccia R."/>
            <person name="San-Blas G."/>
            <person name="Soares C.M."/>
            <person name="Birren B.W."/>
            <person name="Cuomo C.A."/>
        </authorList>
    </citation>
    <scope>NUCLEOTIDE SEQUENCE [LARGE SCALE GENOMIC DNA]</scope>
    <source>
        <strain>Pb03</strain>
    </source>
</reference>
<gene>
    <name type="primary">RRP36</name>
    <name type="ORF">PABG_06895</name>
</gene>
<dbReference type="EMBL" id="KN305544">
    <property type="protein sequence ID" value="EEH16808.1"/>
    <property type="molecule type" value="Genomic_DNA"/>
</dbReference>
<dbReference type="VEuPathDB" id="FungiDB:PABG_06895"/>
<dbReference type="HOGENOM" id="CLU_048802_0_0_1"/>
<dbReference type="OrthoDB" id="36892at33183"/>
<dbReference type="GO" id="GO:0030686">
    <property type="term" value="C:90S preribosome"/>
    <property type="evidence" value="ECO:0007669"/>
    <property type="project" value="TreeGrafter"/>
</dbReference>
<dbReference type="GO" id="GO:0005730">
    <property type="term" value="C:nucleolus"/>
    <property type="evidence" value="ECO:0007669"/>
    <property type="project" value="UniProtKB-SubCell"/>
</dbReference>
<dbReference type="GO" id="GO:0000462">
    <property type="term" value="P:maturation of SSU-rRNA from tricistronic rRNA transcript (SSU-rRNA, 5.8S rRNA, LSU-rRNA)"/>
    <property type="evidence" value="ECO:0007669"/>
    <property type="project" value="TreeGrafter"/>
</dbReference>
<dbReference type="InterPro" id="IPR009292">
    <property type="entry name" value="RRP36"/>
</dbReference>
<dbReference type="PANTHER" id="PTHR21738">
    <property type="entry name" value="RIBOSOMAL RNA PROCESSING PROTEIN 36 HOMOLOG"/>
    <property type="match status" value="1"/>
</dbReference>
<dbReference type="PANTHER" id="PTHR21738:SF0">
    <property type="entry name" value="RIBOSOMAL RNA PROCESSING PROTEIN 36 HOMOLOG"/>
    <property type="match status" value="1"/>
</dbReference>
<dbReference type="Pfam" id="PF06102">
    <property type="entry name" value="RRP36"/>
    <property type="match status" value="1"/>
</dbReference>